<comment type="function">
    <text evidence="1">Methyltransferase required for the conversion of demethylmenaquinol (DMKH2) to menaquinol (MKH2) and the conversion of 2-polyprenyl-6-methoxy-1,4-benzoquinol (DDMQH2) to 2-polyprenyl-3-methyl-6-methoxy-1,4-benzoquinol (DMQH2).</text>
</comment>
<comment type="catalytic activity">
    <reaction evidence="1">
        <text>a 2-demethylmenaquinol + S-adenosyl-L-methionine = a menaquinol + S-adenosyl-L-homocysteine + H(+)</text>
        <dbReference type="Rhea" id="RHEA:42640"/>
        <dbReference type="Rhea" id="RHEA-COMP:9539"/>
        <dbReference type="Rhea" id="RHEA-COMP:9563"/>
        <dbReference type="ChEBI" id="CHEBI:15378"/>
        <dbReference type="ChEBI" id="CHEBI:18151"/>
        <dbReference type="ChEBI" id="CHEBI:55437"/>
        <dbReference type="ChEBI" id="CHEBI:57856"/>
        <dbReference type="ChEBI" id="CHEBI:59789"/>
        <dbReference type="EC" id="2.1.1.163"/>
    </reaction>
</comment>
<comment type="catalytic activity">
    <reaction evidence="1">
        <text>a 2-methoxy-6-(all-trans-polyprenyl)benzene-1,4-diol + S-adenosyl-L-methionine = a 5-methoxy-2-methyl-3-(all-trans-polyprenyl)benzene-1,4-diol + S-adenosyl-L-homocysteine + H(+)</text>
        <dbReference type="Rhea" id="RHEA:28286"/>
        <dbReference type="Rhea" id="RHEA-COMP:10858"/>
        <dbReference type="Rhea" id="RHEA-COMP:10859"/>
        <dbReference type="ChEBI" id="CHEBI:15378"/>
        <dbReference type="ChEBI" id="CHEBI:57856"/>
        <dbReference type="ChEBI" id="CHEBI:59789"/>
        <dbReference type="ChEBI" id="CHEBI:84166"/>
        <dbReference type="ChEBI" id="CHEBI:84167"/>
        <dbReference type="EC" id="2.1.1.201"/>
    </reaction>
</comment>
<comment type="pathway">
    <text evidence="1">Quinol/quinone metabolism; menaquinone biosynthesis; menaquinol from 1,4-dihydroxy-2-naphthoate: step 2/2.</text>
</comment>
<comment type="pathway">
    <text evidence="1">Cofactor biosynthesis; ubiquinone biosynthesis.</text>
</comment>
<comment type="similarity">
    <text evidence="1">Belongs to the class I-like SAM-binding methyltransferase superfamily. MenG/UbiE family.</text>
</comment>
<dbReference type="EC" id="2.1.1.163" evidence="1"/>
<dbReference type="EC" id="2.1.1.201" evidence="1"/>
<dbReference type="EMBL" id="CP001489">
    <property type="protein sequence ID" value="ACO02836.1"/>
    <property type="molecule type" value="Genomic_DNA"/>
</dbReference>
<dbReference type="RefSeq" id="WP_002965588.1">
    <property type="nucleotide sequence ID" value="NC_012442.1"/>
</dbReference>
<dbReference type="SMR" id="C0RMK3"/>
<dbReference type="GeneID" id="97534890"/>
<dbReference type="KEGG" id="bmi:BMEA_B1053"/>
<dbReference type="HOGENOM" id="CLU_037990_0_0_5"/>
<dbReference type="UniPathway" id="UPA00079">
    <property type="reaction ID" value="UER00169"/>
</dbReference>
<dbReference type="UniPathway" id="UPA00232"/>
<dbReference type="Proteomes" id="UP000001748">
    <property type="component" value="Chromosome II"/>
</dbReference>
<dbReference type="GO" id="GO:0008425">
    <property type="term" value="F:2-methoxy-6-polyprenyl-1,4-benzoquinol methyltransferase activity"/>
    <property type="evidence" value="ECO:0007669"/>
    <property type="project" value="UniProtKB-UniRule"/>
</dbReference>
<dbReference type="GO" id="GO:0043770">
    <property type="term" value="F:demethylmenaquinone methyltransferase activity"/>
    <property type="evidence" value="ECO:0007669"/>
    <property type="project" value="UniProtKB-UniRule"/>
</dbReference>
<dbReference type="GO" id="GO:0009060">
    <property type="term" value="P:aerobic respiration"/>
    <property type="evidence" value="ECO:0007669"/>
    <property type="project" value="UniProtKB-UniRule"/>
</dbReference>
<dbReference type="GO" id="GO:0009234">
    <property type="term" value="P:menaquinone biosynthetic process"/>
    <property type="evidence" value="ECO:0007669"/>
    <property type="project" value="UniProtKB-UniRule"/>
</dbReference>
<dbReference type="GO" id="GO:0032259">
    <property type="term" value="P:methylation"/>
    <property type="evidence" value="ECO:0007669"/>
    <property type="project" value="UniProtKB-KW"/>
</dbReference>
<dbReference type="CDD" id="cd02440">
    <property type="entry name" value="AdoMet_MTases"/>
    <property type="match status" value="1"/>
</dbReference>
<dbReference type="FunFam" id="3.40.50.150:FF:000064">
    <property type="entry name" value="2-methoxy-6-polyprenyl-1,4-benzoquinol methylase, mitochondrial"/>
    <property type="match status" value="1"/>
</dbReference>
<dbReference type="Gene3D" id="3.40.50.150">
    <property type="entry name" value="Vaccinia Virus protein VP39"/>
    <property type="match status" value="1"/>
</dbReference>
<dbReference type="HAMAP" id="MF_01813">
    <property type="entry name" value="MenG_UbiE_methyltr"/>
    <property type="match status" value="1"/>
</dbReference>
<dbReference type="InterPro" id="IPR029063">
    <property type="entry name" value="SAM-dependent_MTases_sf"/>
</dbReference>
<dbReference type="InterPro" id="IPR004033">
    <property type="entry name" value="UbiE/COQ5_MeTrFase"/>
</dbReference>
<dbReference type="InterPro" id="IPR023576">
    <property type="entry name" value="UbiE/COQ5_MeTrFase_CS"/>
</dbReference>
<dbReference type="NCBIfam" id="TIGR01934">
    <property type="entry name" value="MenG_MenH_UbiE"/>
    <property type="match status" value="1"/>
</dbReference>
<dbReference type="NCBIfam" id="NF001242">
    <property type="entry name" value="PRK00216.1-3"/>
    <property type="match status" value="1"/>
</dbReference>
<dbReference type="NCBIfam" id="NF001244">
    <property type="entry name" value="PRK00216.1-5"/>
    <property type="match status" value="1"/>
</dbReference>
<dbReference type="PANTHER" id="PTHR43591:SF24">
    <property type="entry name" value="2-METHOXY-6-POLYPRENYL-1,4-BENZOQUINOL METHYLASE, MITOCHONDRIAL"/>
    <property type="match status" value="1"/>
</dbReference>
<dbReference type="PANTHER" id="PTHR43591">
    <property type="entry name" value="METHYLTRANSFERASE"/>
    <property type="match status" value="1"/>
</dbReference>
<dbReference type="Pfam" id="PF01209">
    <property type="entry name" value="Ubie_methyltran"/>
    <property type="match status" value="1"/>
</dbReference>
<dbReference type="SUPFAM" id="SSF53335">
    <property type="entry name" value="S-adenosyl-L-methionine-dependent methyltransferases"/>
    <property type="match status" value="1"/>
</dbReference>
<dbReference type="PROSITE" id="PS51608">
    <property type="entry name" value="SAM_MT_UBIE"/>
    <property type="match status" value="1"/>
</dbReference>
<dbReference type="PROSITE" id="PS01183">
    <property type="entry name" value="UBIE_1"/>
    <property type="match status" value="1"/>
</dbReference>
<dbReference type="PROSITE" id="PS01184">
    <property type="entry name" value="UBIE_2"/>
    <property type="match status" value="1"/>
</dbReference>
<accession>C0RMK3</accession>
<gene>
    <name evidence="1" type="primary">ubiE</name>
    <name type="ordered locus">BMEA_B1053</name>
</gene>
<organism>
    <name type="scientific">Brucella melitensis biotype 2 (strain ATCC 23457)</name>
    <dbReference type="NCBI Taxonomy" id="546272"/>
    <lineage>
        <taxon>Bacteria</taxon>
        <taxon>Pseudomonadati</taxon>
        <taxon>Pseudomonadota</taxon>
        <taxon>Alphaproteobacteria</taxon>
        <taxon>Hyphomicrobiales</taxon>
        <taxon>Brucellaceae</taxon>
        <taxon>Brucella/Ochrobactrum group</taxon>
        <taxon>Brucella</taxon>
    </lineage>
</organism>
<keyword id="KW-0474">Menaquinone biosynthesis</keyword>
<keyword id="KW-0489">Methyltransferase</keyword>
<keyword id="KW-0949">S-adenosyl-L-methionine</keyword>
<keyword id="KW-0808">Transferase</keyword>
<keyword id="KW-0831">Ubiquinone biosynthesis</keyword>
<protein>
    <recommendedName>
        <fullName evidence="1">Ubiquinone/menaquinone biosynthesis C-methyltransferase UbiE</fullName>
        <ecNumber evidence="1">2.1.1.163</ecNumber>
        <ecNumber evidence="1">2.1.1.201</ecNumber>
    </recommendedName>
    <alternativeName>
        <fullName evidence="1">2-methoxy-6-polyprenyl-1,4-benzoquinol methylase</fullName>
    </alternativeName>
    <alternativeName>
        <fullName evidence="1">Demethylmenaquinone methyltransferase</fullName>
    </alternativeName>
</protein>
<sequence length="269" mass="29898">MSQQNGNVNRVGAQDRVGASGGMEHSFGFKAVDENEKQGLVNDVFHKVAKRYDIMNDLMSAGMHRVWKDAMVAWLAPSKRPGWTSLDVAGGTGDIAFRIVEASGRQAHVTILDINGSMLGVGRERAIKKGLIDNLEFVEANAEELPFEDNSFDAYTIAFGIRNVPHIDKALSEAYRVLKPGGRFLCLEFSEVELPVLDKVYDEWSFRAIPRIGKMITGDADSYSYLVESIRKFPKQQDFAAMIEKAGFERVSYRNFTGGIAALHSGWKL</sequence>
<name>UBIE_BRUMB</name>
<evidence type="ECO:0000255" key="1">
    <source>
        <dbReference type="HAMAP-Rule" id="MF_01813"/>
    </source>
</evidence>
<proteinExistence type="inferred from homology"/>
<feature type="chain" id="PRO_1000187735" description="Ubiquinone/menaquinone biosynthesis C-methyltransferase UbiE">
    <location>
        <begin position="1"/>
        <end position="269"/>
    </location>
</feature>
<feature type="binding site" evidence="1">
    <location>
        <position position="92"/>
    </location>
    <ligand>
        <name>S-adenosyl-L-methionine</name>
        <dbReference type="ChEBI" id="CHEBI:59789"/>
    </ligand>
</feature>
<feature type="binding site" evidence="1">
    <location>
        <position position="113"/>
    </location>
    <ligand>
        <name>S-adenosyl-L-methionine</name>
        <dbReference type="ChEBI" id="CHEBI:59789"/>
    </ligand>
</feature>
<feature type="binding site" evidence="1">
    <location>
        <begin position="141"/>
        <end position="142"/>
    </location>
    <ligand>
        <name>S-adenosyl-L-methionine</name>
        <dbReference type="ChEBI" id="CHEBI:59789"/>
    </ligand>
</feature>
<reference key="1">
    <citation type="submission" date="2009-03" db="EMBL/GenBank/DDBJ databases">
        <title>Brucella melitensis ATCC 23457 whole genome shotgun sequencing project.</title>
        <authorList>
            <person name="Setubal J.C."/>
            <person name="Boyle S."/>
            <person name="Crasta O.R."/>
            <person name="Gillespie J.J."/>
            <person name="Kenyon R.W."/>
            <person name="Lu J."/>
            <person name="Mane S."/>
            <person name="Nagrani S."/>
            <person name="Shallom J.M."/>
            <person name="Shallom S."/>
            <person name="Shukla M."/>
            <person name="Snyder E.E."/>
            <person name="Sobral B.W."/>
            <person name="Wattam A.R."/>
            <person name="Will R."/>
            <person name="Williams K."/>
            <person name="Yoo H."/>
            <person name="Munk C."/>
            <person name="Tapia R."/>
            <person name="Han C."/>
            <person name="Detter J.C."/>
            <person name="Bruce D."/>
            <person name="Brettin T.S."/>
        </authorList>
    </citation>
    <scope>NUCLEOTIDE SEQUENCE [LARGE SCALE GENOMIC DNA]</scope>
    <source>
        <strain>ATCC 23457</strain>
    </source>
</reference>